<keyword id="KW-0008">Acetylcholine receptor inhibiting toxin</keyword>
<keyword id="KW-0027">Amidation</keyword>
<keyword id="KW-0903">Direct protein sequencing</keyword>
<keyword id="KW-1015">Disulfide bond</keyword>
<keyword id="KW-0872">Ion channel impairing toxin</keyword>
<keyword id="KW-0528">Neurotoxin</keyword>
<keyword id="KW-0629">Postsynaptic neurotoxin</keyword>
<keyword id="KW-0964">Secreted</keyword>
<keyword id="KW-0800">Toxin</keyword>
<organism>
    <name type="scientific">Conus aulicus</name>
    <name type="common">Princely cone</name>
    <dbReference type="NCBI Taxonomy" id="89437"/>
    <lineage>
        <taxon>Eukaryota</taxon>
        <taxon>Metazoa</taxon>
        <taxon>Spiralia</taxon>
        <taxon>Lophotrochozoa</taxon>
        <taxon>Mollusca</taxon>
        <taxon>Gastropoda</taxon>
        <taxon>Caenogastropoda</taxon>
        <taxon>Neogastropoda</taxon>
        <taxon>Conoidea</taxon>
        <taxon>Conidae</taxon>
        <taxon>Conus</taxon>
        <taxon>Darioconus</taxon>
    </lineage>
</organism>
<comment type="function">
    <text>Alpha-conotoxins act on postsynaptic membranes, they bind to the nicotinic acetylcholine receptors (nAChR) and thus inhibit them. This toxin blocks mammalian nAChR alpha-3/beta-4 subunits.</text>
</comment>
<comment type="subcellular location">
    <subcellularLocation>
        <location evidence="2">Secreted</location>
    </subcellularLocation>
</comment>
<comment type="tissue specificity">
    <text evidence="4">Expressed by the venom duct.</text>
</comment>
<comment type="domain">
    <text evidence="3">The cysteine framework is I (CC-C-C). Alpha4/7 pattern.</text>
</comment>
<comment type="mass spectrometry"/>
<comment type="similarity">
    <text evidence="3">Belongs to the conotoxin A superfamily.</text>
</comment>
<protein>
    <recommendedName>
        <fullName>Alpha-conotoxin AuIC</fullName>
    </recommendedName>
</protein>
<name>CA1C_CONAL</name>
<feature type="peptide" id="PRO_0000044456" description="Alpha-conotoxin AuIC" evidence="2">
    <location>
        <begin position="1"/>
        <end position="16"/>
    </location>
</feature>
<feature type="region of interest" description="Ser-Xaa-Pro motif, crucial for potent interaction with nAChR" evidence="1">
    <location>
        <begin position="4"/>
        <end position="6"/>
    </location>
</feature>
<feature type="modified residue" description="Cysteine amide" evidence="2">
    <location>
        <position position="16"/>
    </location>
</feature>
<feature type="disulfide bond" evidence="1">
    <location>
        <begin position="2"/>
        <end position="8"/>
    </location>
</feature>
<feature type="disulfide bond" evidence="1">
    <location>
        <begin position="3"/>
        <end position="16"/>
    </location>
</feature>
<proteinExistence type="evidence at protein level"/>
<reference key="1">
    <citation type="journal article" date="1998" name="J. Neurosci.">
        <title>Alpha-conotoxin AuIB selectively blocks alpha3 beta4 nicotinic acetylcholine receptors and nicotine-evoked norepinephrine release.</title>
        <authorList>
            <person name="Luo S."/>
            <person name="Kulak J.M."/>
            <person name="Cartier G.E."/>
            <person name="Jacobsen R.B."/>
            <person name="Yoshikami D."/>
            <person name="Olivera B.M."/>
            <person name="McIntosh J.M."/>
        </authorList>
    </citation>
    <scope>PROTEIN SEQUENCE</scope>
    <scope>SYNTHESIS</scope>
    <scope>AMIDATION AT CYS-16</scope>
    <scope>MASS SPECTROMETRY</scope>
    <scope>SUBCELLULAR LOCATION</scope>
    <source>
        <tissue>Venom</tissue>
    </source>
</reference>
<dbReference type="PIR" id="C59045">
    <property type="entry name" value="C59045"/>
</dbReference>
<dbReference type="ConoServer" id="407">
    <property type="toxin name" value="AuIC"/>
</dbReference>
<dbReference type="GO" id="GO:0005576">
    <property type="term" value="C:extracellular region"/>
    <property type="evidence" value="ECO:0007669"/>
    <property type="project" value="UniProtKB-SubCell"/>
</dbReference>
<dbReference type="GO" id="GO:0035792">
    <property type="term" value="C:host cell postsynaptic membrane"/>
    <property type="evidence" value="ECO:0007669"/>
    <property type="project" value="UniProtKB-KW"/>
</dbReference>
<dbReference type="GO" id="GO:0030550">
    <property type="term" value="F:acetylcholine receptor inhibitor activity"/>
    <property type="evidence" value="ECO:0007669"/>
    <property type="project" value="UniProtKB-KW"/>
</dbReference>
<dbReference type="GO" id="GO:0099106">
    <property type="term" value="F:ion channel regulator activity"/>
    <property type="evidence" value="ECO:0007669"/>
    <property type="project" value="UniProtKB-KW"/>
</dbReference>
<dbReference type="GO" id="GO:0090729">
    <property type="term" value="F:toxin activity"/>
    <property type="evidence" value="ECO:0007669"/>
    <property type="project" value="UniProtKB-KW"/>
</dbReference>
<dbReference type="InterPro" id="IPR018072">
    <property type="entry name" value="Conotoxin_a-typ_CS"/>
</dbReference>
<dbReference type="PROSITE" id="PS60014">
    <property type="entry name" value="ALPHA_CONOTOXIN"/>
    <property type="match status" value="1"/>
</dbReference>
<sequence>GCCSYPPCFATNSGYC</sequence>
<evidence type="ECO:0000250" key="1">
    <source>
        <dbReference type="UniProtKB" id="P56636"/>
    </source>
</evidence>
<evidence type="ECO:0000269" key="2">
    <source>
    </source>
</evidence>
<evidence type="ECO:0000305" key="3"/>
<evidence type="ECO:0000305" key="4">
    <source>
    </source>
</evidence>
<accession>P56641</accession>